<protein>
    <recommendedName>
        <fullName evidence="12">Protein mono-ADP-ribosyltransferase PARP15</fullName>
        <ecNumber evidence="7 8">2.4.2.-</ecNumber>
    </recommendedName>
    <alternativeName>
        <fullName evidence="11">ADP-ribosyltransferase diphtheria toxin-like 7</fullName>
        <shortName evidence="11">ARTD7</shortName>
    </alternativeName>
    <alternativeName>
        <fullName evidence="10">B-aggressive lymphoma protein 3</fullName>
    </alternativeName>
    <alternativeName>
        <fullName>Poly [ADP-ribose] polymerase 15</fullName>
        <shortName>PARP-15</shortName>
    </alternativeName>
</protein>
<feature type="chain" id="PRO_0000252436" description="Protein mono-ADP-ribosyltransferase PARP15">
    <location>
        <begin position="1"/>
        <end position="678"/>
    </location>
</feature>
<feature type="domain" description="Macro 1" evidence="3">
    <location>
        <begin position="78"/>
        <end position="267"/>
    </location>
</feature>
<feature type="domain" description="Macro 2" evidence="3">
    <location>
        <begin position="293"/>
        <end position="464"/>
    </location>
</feature>
<feature type="domain" description="PARP catalytic" evidence="2">
    <location>
        <begin position="482"/>
        <end position="678"/>
    </location>
</feature>
<feature type="region of interest" description="Disordered" evidence="4">
    <location>
        <begin position="1"/>
        <end position="67"/>
    </location>
</feature>
<feature type="compositionally biased region" description="Low complexity" evidence="4">
    <location>
        <begin position="1"/>
        <end position="19"/>
    </location>
</feature>
<feature type="compositionally biased region" description="Basic residues" evidence="4">
    <location>
        <begin position="49"/>
        <end position="58"/>
    </location>
</feature>
<feature type="binding site" evidence="6 15">
    <location>
        <begin position="312"/>
        <end position="313"/>
    </location>
    <ligand>
        <name>substrate</name>
    </ligand>
</feature>
<feature type="binding site" evidence="6 15">
    <location>
        <begin position="324"/>
        <end position="325"/>
    </location>
    <ligand>
        <name>substrate</name>
    </ligand>
</feature>
<feature type="binding site" evidence="6 15">
    <location>
        <position position="331"/>
    </location>
    <ligand>
        <name>substrate</name>
    </ligand>
</feature>
<feature type="binding site" evidence="6 15">
    <location>
        <position position="335"/>
    </location>
    <ligand>
        <name>substrate</name>
    </ligand>
</feature>
<feature type="binding site" evidence="6 15">
    <location>
        <begin position="409"/>
        <end position="413"/>
    </location>
    <ligand>
        <name>substrate</name>
    </ligand>
</feature>
<feature type="binding site" evidence="6 15">
    <location>
        <position position="449"/>
    </location>
    <ligand>
        <name>substrate</name>
    </ligand>
</feature>
<feature type="splice variant" id="VSP_020971" description="In isoform 2." evidence="9 10">
    <location>
        <begin position="1"/>
        <end position="234"/>
    </location>
</feature>
<feature type="splice variant" id="VSP_020972" description="In isoform 2." evidence="9 10">
    <original>RPITSPLQEVHFLVYTNDDEGC</original>
    <variation>MLQRIGLIFLHNIVVVSNCFYF</variation>
    <location>
        <begin position="235"/>
        <end position="256"/>
    </location>
</feature>
<feature type="sequence variant" id="VAR_027862" description="In dbSNP:rs6793271.">
    <original>R</original>
    <variation>K</variation>
    <location>
        <position position="337"/>
    </location>
</feature>
<feature type="sequence variant" id="VAR_056658" description="In dbSNP:rs34383355.">
    <original>A</original>
    <variation>T</variation>
    <location>
        <position position="521"/>
    </location>
</feature>
<feature type="sequence variant" id="VAR_027863" description="In dbSNP:rs12489170.">
    <original>G</original>
    <variation>R</variation>
    <location>
        <position position="628"/>
    </location>
</feature>
<feature type="mutagenesis site" description="Abolishes catalytic activity." evidence="8">
    <original>H</original>
    <variation>Y</variation>
    <location>
        <position position="559"/>
    </location>
</feature>
<feature type="mutagenesis site" description="Slightly reduces catalytic activity. Abolishes activity; when associated with Y-559 and C-604." evidence="8">
    <original>G</original>
    <variation>A</variation>
    <location>
        <position position="560"/>
    </location>
</feature>
<feature type="mutagenesis site" description="Reduces catalytic activity 20-fold. Abolishes activity; when associated with Y-559 and A-560." evidence="8">
    <original>Y</original>
    <variation>C</variation>
    <location>
        <position position="604"/>
    </location>
</feature>
<feature type="sequence conflict" description="In Ref. 4; AAY64451." evidence="12" ref="4">
    <original>V</original>
    <variation>M</variation>
    <location>
        <position position="42"/>
    </location>
</feature>
<feature type="strand" evidence="16">
    <location>
        <begin position="296"/>
        <end position="301"/>
    </location>
</feature>
<feature type="strand" evidence="16">
    <location>
        <begin position="304"/>
        <end position="311"/>
    </location>
</feature>
<feature type="helix" evidence="16">
    <location>
        <begin position="313"/>
        <end position="315"/>
    </location>
</feature>
<feature type="strand" evidence="16">
    <location>
        <begin position="318"/>
        <end position="325"/>
    </location>
</feature>
<feature type="helix" evidence="16">
    <location>
        <begin position="335"/>
        <end position="343"/>
    </location>
</feature>
<feature type="helix" evidence="16">
    <location>
        <begin position="345"/>
        <end position="355"/>
    </location>
</feature>
<feature type="strand" evidence="16">
    <location>
        <begin position="361"/>
        <end position="366"/>
    </location>
</feature>
<feature type="strand" evidence="16">
    <location>
        <begin position="370"/>
        <end position="379"/>
    </location>
</feature>
<feature type="helix" evidence="16">
    <location>
        <begin position="384"/>
        <end position="397"/>
    </location>
</feature>
<feature type="strand" evidence="16">
    <location>
        <begin position="402"/>
        <end position="405"/>
    </location>
</feature>
<feature type="helix" evidence="16">
    <location>
        <begin position="417"/>
        <end position="434"/>
    </location>
</feature>
<feature type="strand" evidence="16">
    <location>
        <begin position="442"/>
        <end position="449"/>
    </location>
</feature>
<feature type="helix" evidence="16">
    <location>
        <begin position="451"/>
        <end position="461"/>
    </location>
</feature>
<feature type="strand" evidence="18">
    <location>
        <begin position="493"/>
        <end position="498"/>
    </location>
</feature>
<feature type="helix" evidence="18">
    <location>
        <begin position="504"/>
        <end position="517"/>
    </location>
</feature>
<feature type="strand" evidence="18">
    <location>
        <begin position="520"/>
        <end position="530"/>
    </location>
</feature>
<feature type="helix" evidence="18">
    <location>
        <begin position="531"/>
        <end position="548"/>
    </location>
</feature>
<feature type="strand" evidence="19">
    <location>
        <begin position="549"/>
        <end position="551"/>
    </location>
</feature>
<feature type="strand" evidence="18">
    <location>
        <begin position="555"/>
        <end position="561"/>
    </location>
</feature>
<feature type="helix" evidence="18">
    <location>
        <begin position="563"/>
        <end position="565"/>
    </location>
</feature>
<feature type="helix" evidence="18">
    <location>
        <begin position="566"/>
        <end position="572"/>
    </location>
</feature>
<feature type="helix" evidence="17">
    <location>
        <begin position="576"/>
        <end position="578"/>
    </location>
</feature>
<feature type="strand" evidence="18">
    <location>
        <begin position="588"/>
        <end position="595"/>
    </location>
</feature>
<feature type="helix" evidence="18">
    <location>
        <begin position="596"/>
        <end position="599"/>
    </location>
</feature>
<feature type="turn" evidence="18">
    <location>
        <begin position="602"/>
        <end position="604"/>
    </location>
</feature>
<feature type="strand" evidence="18">
    <location>
        <begin position="613"/>
        <end position="620"/>
    </location>
</feature>
<feature type="strand" evidence="18">
    <location>
        <begin position="624"/>
        <end position="627"/>
    </location>
</feature>
<feature type="strand" evidence="18">
    <location>
        <begin position="637"/>
        <end position="639"/>
    </location>
</feature>
<feature type="strand" evidence="17">
    <location>
        <begin position="642"/>
        <end position="646"/>
    </location>
</feature>
<feature type="strand" evidence="18">
    <location>
        <begin position="648"/>
        <end position="652"/>
    </location>
</feature>
<feature type="strand" evidence="18">
    <location>
        <begin position="654"/>
        <end position="656"/>
    </location>
</feature>
<feature type="strand" evidence="18">
    <location>
        <begin position="658"/>
        <end position="662"/>
    </location>
</feature>
<feature type="strand" evidence="18">
    <location>
        <begin position="667"/>
        <end position="677"/>
    </location>
</feature>
<proteinExistence type="evidence at protein level"/>
<keyword id="KW-0002">3D-structure</keyword>
<keyword id="KW-0025">Alternative splicing</keyword>
<keyword id="KW-0328">Glycosyltransferase</keyword>
<keyword id="KW-0520">NAD</keyword>
<keyword id="KW-0548">Nucleotidyltransferase</keyword>
<keyword id="KW-0539">Nucleus</keyword>
<keyword id="KW-1267">Proteomics identification</keyword>
<keyword id="KW-1185">Reference proteome</keyword>
<keyword id="KW-0677">Repeat</keyword>
<keyword id="KW-0804">Transcription</keyword>
<keyword id="KW-0805">Transcription regulation</keyword>
<keyword id="KW-0808">Transferase</keyword>
<reference key="1">
    <citation type="journal article" date="2004" name="Nat. Genet.">
        <title>Complete sequencing and characterization of 21,243 full-length human cDNAs.</title>
        <authorList>
            <person name="Ota T."/>
            <person name="Suzuki Y."/>
            <person name="Nishikawa T."/>
            <person name="Otsuki T."/>
            <person name="Sugiyama T."/>
            <person name="Irie R."/>
            <person name="Wakamatsu A."/>
            <person name="Hayashi K."/>
            <person name="Sato H."/>
            <person name="Nagai K."/>
            <person name="Kimura K."/>
            <person name="Makita H."/>
            <person name="Sekine M."/>
            <person name="Obayashi M."/>
            <person name="Nishi T."/>
            <person name="Shibahara T."/>
            <person name="Tanaka T."/>
            <person name="Ishii S."/>
            <person name="Yamamoto J."/>
            <person name="Saito K."/>
            <person name="Kawai Y."/>
            <person name="Isono Y."/>
            <person name="Nakamura Y."/>
            <person name="Nagahari K."/>
            <person name="Murakami K."/>
            <person name="Yasuda T."/>
            <person name="Iwayanagi T."/>
            <person name="Wagatsuma M."/>
            <person name="Shiratori A."/>
            <person name="Sudo H."/>
            <person name="Hosoiri T."/>
            <person name="Kaku Y."/>
            <person name="Kodaira H."/>
            <person name="Kondo H."/>
            <person name="Sugawara M."/>
            <person name="Takahashi M."/>
            <person name="Kanda K."/>
            <person name="Yokoi T."/>
            <person name="Furuya T."/>
            <person name="Kikkawa E."/>
            <person name="Omura Y."/>
            <person name="Abe K."/>
            <person name="Kamihara K."/>
            <person name="Katsuta N."/>
            <person name="Sato K."/>
            <person name="Tanikawa M."/>
            <person name="Yamazaki M."/>
            <person name="Ninomiya K."/>
            <person name="Ishibashi T."/>
            <person name="Yamashita H."/>
            <person name="Murakawa K."/>
            <person name="Fujimori K."/>
            <person name="Tanai H."/>
            <person name="Kimata M."/>
            <person name="Watanabe M."/>
            <person name="Hiraoka S."/>
            <person name="Chiba Y."/>
            <person name="Ishida S."/>
            <person name="Ono Y."/>
            <person name="Takiguchi S."/>
            <person name="Watanabe S."/>
            <person name="Yosida M."/>
            <person name="Hotuta T."/>
            <person name="Kusano J."/>
            <person name="Kanehori K."/>
            <person name="Takahashi-Fujii A."/>
            <person name="Hara H."/>
            <person name="Tanase T.-O."/>
            <person name="Nomura Y."/>
            <person name="Togiya S."/>
            <person name="Komai F."/>
            <person name="Hara R."/>
            <person name="Takeuchi K."/>
            <person name="Arita M."/>
            <person name="Imose N."/>
            <person name="Musashino K."/>
            <person name="Yuuki H."/>
            <person name="Oshima A."/>
            <person name="Sasaki N."/>
            <person name="Aotsuka S."/>
            <person name="Yoshikawa Y."/>
            <person name="Matsunawa H."/>
            <person name="Ichihara T."/>
            <person name="Shiohata N."/>
            <person name="Sano S."/>
            <person name="Moriya S."/>
            <person name="Momiyama H."/>
            <person name="Satoh N."/>
            <person name="Takami S."/>
            <person name="Terashima Y."/>
            <person name="Suzuki O."/>
            <person name="Nakagawa S."/>
            <person name="Senoh A."/>
            <person name="Mizoguchi H."/>
            <person name="Goto Y."/>
            <person name="Shimizu F."/>
            <person name="Wakebe H."/>
            <person name="Hishigaki H."/>
            <person name="Watanabe T."/>
            <person name="Sugiyama A."/>
            <person name="Takemoto M."/>
            <person name="Kawakami B."/>
            <person name="Yamazaki M."/>
            <person name="Watanabe K."/>
            <person name="Kumagai A."/>
            <person name="Itakura S."/>
            <person name="Fukuzumi Y."/>
            <person name="Fujimori Y."/>
            <person name="Komiyama M."/>
            <person name="Tashiro H."/>
            <person name="Tanigami A."/>
            <person name="Fujiwara T."/>
            <person name="Ono T."/>
            <person name="Yamada K."/>
            <person name="Fujii Y."/>
            <person name="Ozaki K."/>
            <person name="Hirao M."/>
            <person name="Ohmori Y."/>
            <person name="Kawabata A."/>
            <person name="Hikiji T."/>
            <person name="Kobatake N."/>
            <person name="Inagaki H."/>
            <person name="Ikema Y."/>
            <person name="Okamoto S."/>
            <person name="Okitani R."/>
            <person name="Kawakami T."/>
            <person name="Noguchi S."/>
            <person name="Itoh T."/>
            <person name="Shigeta K."/>
            <person name="Senba T."/>
            <person name="Matsumura K."/>
            <person name="Nakajima Y."/>
            <person name="Mizuno T."/>
            <person name="Morinaga M."/>
            <person name="Sasaki M."/>
            <person name="Togashi T."/>
            <person name="Oyama M."/>
            <person name="Hata H."/>
            <person name="Watanabe M."/>
            <person name="Komatsu T."/>
            <person name="Mizushima-Sugano J."/>
            <person name="Satoh T."/>
            <person name="Shirai Y."/>
            <person name="Takahashi Y."/>
            <person name="Nakagawa K."/>
            <person name="Okumura K."/>
            <person name="Nagase T."/>
            <person name="Nomura N."/>
            <person name="Kikuchi H."/>
            <person name="Masuho Y."/>
            <person name="Yamashita R."/>
            <person name="Nakai K."/>
            <person name="Yada T."/>
            <person name="Nakamura Y."/>
            <person name="Ohara O."/>
            <person name="Isogai T."/>
            <person name="Sugano S."/>
        </authorList>
    </citation>
    <scope>NUCLEOTIDE SEQUENCE [LARGE SCALE MRNA] (ISOFORM 2)</scope>
    <source>
        <tissue>Thymus</tissue>
    </source>
</reference>
<reference key="2">
    <citation type="journal article" date="2006" name="Nature">
        <title>The DNA sequence, annotation and analysis of human chromosome 3.</title>
        <authorList>
            <person name="Muzny D.M."/>
            <person name="Scherer S.E."/>
            <person name="Kaul R."/>
            <person name="Wang J."/>
            <person name="Yu J."/>
            <person name="Sudbrak R."/>
            <person name="Buhay C.J."/>
            <person name="Chen R."/>
            <person name="Cree A."/>
            <person name="Ding Y."/>
            <person name="Dugan-Rocha S."/>
            <person name="Gill R."/>
            <person name="Gunaratne P."/>
            <person name="Harris R.A."/>
            <person name="Hawes A.C."/>
            <person name="Hernandez J."/>
            <person name="Hodgson A.V."/>
            <person name="Hume J."/>
            <person name="Jackson A."/>
            <person name="Khan Z.M."/>
            <person name="Kovar-Smith C."/>
            <person name="Lewis L.R."/>
            <person name="Lozado R.J."/>
            <person name="Metzker M.L."/>
            <person name="Milosavljevic A."/>
            <person name="Miner G.R."/>
            <person name="Morgan M.B."/>
            <person name="Nazareth L.V."/>
            <person name="Scott G."/>
            <person name="Sodergren E."/>
            <person name="Song X.-Z."/>
            <person name="Steffen D."/>
            <person name="Wei S."/>
            <person name="Wheeler D.A."/>
            <person name="Wright M.W."/>
            <person name="Worley K.C."/>
            <person name="Yuan Y."/>
            <person name="Zhang Z."/>
            <person name="Adams C.Q."/>
            <person name="Ansari-Lari M.A."/>
            <person name="Ayele M."/>
            <person name="Brown M.J."/>
            <person name="Chen G."/>
            <person name="Chen Z."/>
            <person name="Clendenning J."/>
            <person name="Clerc-Blankenburg K.P."/>
            <person name="Chen R."/>
            <person name="Chen Z."/>
            <person name="Davis C."/>
            <person name="Delgado O."/>
            <person name="Dinh H.H."/>
            <person name="Dong W."/>
            <person name="Draper H."/>
            <person name="Ernst S."/>
            <person name="Fu G."/>
            <person name="Gonzalez-Garay M.L."/>
            <person name="Garcia D.K."/>
            <person name="Gillett W."/>
            <person name="Gu J."/>
            <person name="Hao B."/>
            <person name="Haugen E."/>
            <person name="Havlak P."/>
            <person name="He X."/>
            <person name="Hennig S."/>
            <person name="Hu S."/>
            <person name="Huang W."/>
            <person name="Jackson L.R."/>
            <person name="Jacob L.S."/>
            <person name="Kelly S.H."/>
            <person name="Kube M."/>
            <person name="Levy R."/>
            <person name="Li Z."/>
            <person name="Liu B."/>
            <person name="Liu J."/>
            <person name="Liu W."/>
            <person name="Lu J."/>
            <person name="Maheshwari M."/>
            <person name="Nguyen B.-V."/>
            <person name="Okwuonu G.O."/>
            <person name="Palmeiri A."/>
            <person name="Pasternak S."/>
            <person name="Perez L.M."/>
            <person name="Phelps K.A."/>
            <person name="Plopper F.J."/>
            <person name="Qiang B."/>
            <person name="Raymond C."/>
            <person name="Rodriguez R."/>
            <person name="Saenphimmachak C."/>
            <person name="Santibanez J."/>
            <person name="Shen H."/>
            <person name="Shen Y."/>
            <person name="Subramanian S."/>
            <person name="Tabor P.E."/>
            <person name="Verduzco D."/>
            <person name="Waldron L."/>
            <person name="Wang J."/>
            <person name="Wang J."/>
            <person name="Wang Q."/>
            <person name="Williams G.A."/>
            <person name="Wong G.K.-S."/>
            <person name="Yao Z."/>
            <person name="Zhang J."/>
            <person name="Zhang X."/>
            <person name="Zhao G."/>
            <person name="Zhou J."/>
            <person name="Zhou Y."/>
            <person name="Nelson D."/>
            <person name="Lehrach H."/>
            <person name="Reinhardt R."/>
            <person name="Naylor S.L."/>
            <person name="Yang H."/>
            <person name="Olson M."/>
            <person name="Weinstock G."/>
            <person name="Gibbs R.A."/>
        </authorList>
    </citation>
    <scope>NUCLEOTIDE SEQUENCE [LARGE SCALE GENOMIC DNA]</scope>
</reference>
<reference key="3">
    <citation type="journal article" date="2004" name="Genome Res.">
        <title>The status, quality, and expansion of the NIH full-length cDNA project: the Mammalian Gene Collection (MGC).</title>
        <authorList>
            <consortium name="The MGC Project Team"/>
        </authorList>
    </citation>
    <scope>NUCLEOTIDE SEQUENCE [LARGE SCALE MRNA] (ISOFORM 2)</scope>
    <source>
        <tissue>Liver</tissue>
    </source>
</reference>
<reference key="4">
    <citation type="journal article" date="2005" name="J. Biol. Chem.">
        <title>B-aggressive lymphoma family proteins have unique domains that modulate transcription and exhibit poly(ADP-ribose) polymerase activity.</title>
        <authorList>
            <person name="Aguiar R.C.T."/>
            <person name="Takeyama K."/>
            <person name="He C."/>
            <person name="Kreinbrink K."/>
            <person name="Shipp M.A."/>
        </authorList>
    </citation>
    <scope>NUCLEOTIDE SEQUENCE [MRNA] OF 6-678 (ISOFORM 1)</scope>
    <scope>FUNCTION</scope>
</reference>
<reference key="5">
    <citation type="journal article" date="2010" name="Trends Biochem. Sci.">
        <title>Toward a unified nomenclature for mammalian ADP-ribosyltransferases.</title>
        <authorList>
            <person name="Hottiger M.O."/>
            <person name="Hassa P.O."/>
            <person name="Luscher B."/>
            <person name="Schuler H."/>
            <person name="Koch-Nolte F."/>
        </authorList>
    </citation>
    <scope>NOMENCLATURE</scope>
</reference>
<reference key="6">
    <citation type="journal article" date="2014" name="Nat. Commun.">
        <title>Family-wide analysis of poly(ADP-ribose) polymerase activity.</title>
        <authorList>
            <person name="Vyas S."/>
            <person name="Matic I."/>
            <person name="Uchima L."/>
            <person name="Rood J."/>
            <person name="Zaja R."/>
            <person name="Hay R.T."/>
            <person name="Ahel I."/>
            <person name="Chang P."/>
        </authorList>
    </citation>
    <scope>FUNCTION</scope>
</reference>
<reference key="7">
    <citation type="journal article" date="2012" name="J. Med. Chem.">
        <title>Discovery of ligands for ADP-ribosyltransferases via docking-based virtual screening.</title>
        <authorList>
            <person name="Andersson C.D."/>
            <person name="Karlberg T."/>
            <person name="Ekblad T."/>
            <person name="Lindgren A.E."/>
            <person name="Thorsell A.G."/>
            <person name="Spjut S."/>
            <person name="Uciechowska U."/>
            <person name="Niemiec M.S."/>
            <person name="Wittung-Stafshede P."/>
            <person name="Weigelt J."/>
            <person name="Elofsson M."/>
            <person name="Schuler H."/>
            <person name="Linusson A."/>
        </authorList>
    </citation>
    <scope>X-RAY CRYSTALLOGRAPHY (2.40 ANGSTROMS) OF 481-678</scope>
</reference>
<reference key="8">
    <citation type="journal article" date="2013" name="Structure">
        <title>Recognition of mono-ADP-ribosylated ARTD10 substrates by ARTD8 macrodomains.</title>
        <authorList>
            <person name="Forst A.H."/>
            <person name="Karlberg T."/>
            <person name="Herzog N."/>
            <person name="Thorsell A.G."/>
            <person name="Gross A."/>
            <person name="Feijs K.L."/>
            <person name="Verheugd P."/>
            <person name="Kursula P."/>
            <person name="Nijmeijer B."/>
            <person name="Kremmer E."/>
            <person name="Kleine H."/>
            <person name="Ladurner A.G."/>
            <person name="Schuler H."/>
            <person name="Luscher B."/>
        </authorList>
    </citation>
    <scope>X-RAY CRYSTALLOGRAPHY (2.20 ANGSTROMS) OF 295-470 IN COMPLEX WITH SUBSTRATE</scope>
</reference>
<reference key="9">
    <citation type="journal article" date="2015" name="J. Biol. Chem.">
        <title>Structural basis for lack of ADP-ribosyltransferase activity in poly(ADP-ribose) polymerase-13/zinc finger antiviral protein.</title>
        <authorList>
            <person name="Karlberg T."/>
            <person name="Klepsch M."/>
            <person name="Thorsell A.G."/>
            <person name="Andersson C.D."/>
            <person name="Linusson A."/>
            <person name="Schuler H."/>
        </authorList>
    </citation>
    <scope>X-RAY CRYSTALLOGRAPHY (2.20 ANGSTROMS) OF 481-678</scope>
    <scope>FUNCTION</scope>
    <scope>MUTAGENESIS OF HIS-559; GLY-560 AND TYR-604</scope>
</reference>
<comment type="function">
    <text evidence="5 7 8">Mono-ADP-ribosyltransferase that mediates mono-ADP-ribosylation of target proteins (PubMed:16061477, PubMed:25043379, PubMed:25635049). Acts as a negative regulator of transcription (PubMed:16061477).</text>
</comment>
<comment type="catalytic activity">
    <reaction evidence="1">
        <text>L-aspartyl-[protein] + NAD(+) = 4-O-(ADP-D-ribosyl)-L-aspartyl-[protein] + nicotinamide</text>
        <dbReference type="Rhea" id="RHEA:54424"/>
        <dbReference type="Rhea" id="RHEA-COMP:9867"/>
        <dbReference type="Rhea" id="RHEA-COMP:13832"/>
        <dbReference type="ChEBI" id="CHEBI:17154"/>
        <dbReference type="ChEBI" id="CHEBI:29961"/>
        <dbReference type="ChEBI" id="CHEBI:57540"/>
        <dbReference type="ChEBI" id="CHEBI:138102"/>
    </reaction>
    <physiologicalReaction direction="left-to-right" evidence="12">
        <dbReference type="Rhea" id="RHEA:54425"/>
    </physiologicalReaction>
</comment>
<comment type="catalytic activity">
    <reaction evidence="1">
        <text>L-glutamyl-[protein] + NAD(+) = 5-O-(ADP-D-ribosyl)-L-glutamyl-[protein] + nicotinamide</text>
        <dbReference type="Rhea" id="RHEA:58224"/>
        <dbReference type="Rhea" id="RHEA-COMP:10208"/>
        <dbReference type="Rhea" id="RHEA-COMP:15089"/>
        <dbReference type="ChEBI" id="CHEBI:17154"/>
        <dbReference type="ChEBI" id="CHEBI:29973"/>
        <dbReference type="ChEBI" id="CHEBI:57540"/>
        <dbReference type="ChEBI" id="CHEBI:142540"/>
    </reaction>
    <physiologicalReaction direction="left-to-right" evidence="12">
        <dbReference type="Rhea" id="RHEA:58225"/>
    </physiologicalReaction>
</comment>
<comment type="interaction">
    <interactant intactId="EBI-17287327">
        <id>Q460N3-2</id>
    </interactant>
    <interactant intactId="EBI-10262547">
        <id>Q8IXM6</id>
        <label>NRM</label>
    </interactant>
    <organismsDiffer>false</organismsDiffer>
    <experiments>3</experiments>
</comment>
<comment type="subcellular location">
    <subcellularLocation>
        <location evidence="13">Nucleus</location>
    </subcellularLocation>
</comment>
<comment type="alternative products">
    <event type="alternative splicing"/>
    <isoform>
        <id>Q460N3-1</id>
        <name>1</name>
        <sequence type="displayed"/>
    </isoform>
    <isoform>
        <id>Q460N3-2</id>
        <name>2</name>
        <sequence type="described" ref="VSP_020971 VSP_020972"/>
    </isoform>
</comment>
<comment type="similarity">
    <text evidence="12">Belongs to the ARTD/PARP family.</text>
</comment>
<comment type="sequence caution" evidence="12">
    <conflict type="erroneous initiation">
        <sequence resource="EMBL-CDS" id="AAY64451"/>
    </conflict>
    <text>Truncated N-terminus.</text>
</comment>
<dbReference type="EC" id="2.4.2.-" evidence="7 8"/>
<dbReference type="EMBL" id="AK097916">
    <property type="protein sequence ID" value="BAC05197.1"/>
    <property type="molecule type" value="mRNA"/>
</dbReference>
<dbReference type="EMBL" id="BC101703">
    <property type="protein sequence ID" value="AAI01704.1"/>
    <property type="molecule type" value="mRNA"/>
</dbReference>
<dbReference type="EMBL" id="BC101701">
    <property type="protein sequence ID" value="AAI01702.1"/>
    <property type="molecule type" value="mRNA"/>
</dbReference>
<dbReference type="EMBL" id="AC092908">
    <property type="status" value="NOT_ANNOTATED_CDS"/>
    <property type="molecule type" value="Genomic_DNA"/>
</dbReference>
<dbReference type="EMBL" id="DQ063586">
    <property type="protein sequence ID" value="AAY64451.1"/>
    <property type="status" value="ALT_INIT"/>
    <property type="molecule type" value="mRNA"/>
</dbReference>
<dbReference type="CCDS" id="CCDS3016.1">
    <molecule id="Q460N3-2"/>
</dbReference>
<dbReference type="CCDS" id="CCDS46893.1">
    <molecule id="Q460N3-1"/>
</dbReference>
<dbReference type="RefSeq" id="NP_001106995.1">
    <molecule id="Q460N3-1"/>
    <property type="nucleotide sequence ID" value="NM_001113523.3"/>
</dbReference>
<dbReference type="RefSeq" id="NP_001295249.1">
    <property type="nucleotide sequence ID" value="NM_001308320.1"/>
</dbReference>
<dbReference type="RefSeq" id="NP_689828.1">
    <molecule id="Q460N3-2"/>
    <property type="nucleotide sequence ID" value="NM_152615.3"/>
</dbReference>
<dbReference type="RefSeq" id="XP_047303538.1">
    <molecule id="Q460N3-2"/>
    <property type="nucleotide sequence ID" value="XM_047447582.1"/>
</dbReference>
<dbReference type="RefSeq" id="XP_054201448.1">
    <molecule id="Q460N3-2"/>
    <property type="nucleotide sequence ID" value="XM_054345473.1"/>
</dbReference>
<dbReference type="PDB" id="3BLJ">
    <property type="method" value="X-ray"/>
    <property type="resolution" value="2.20 A"/>
    <property type="chains" value="A/B=481-678"/>
</dbReference>
<dbReference type="PDB" id="3GEY">
    <property type="method" value="X-ray"/>
    <property type="resolution" value="2.20 A"/>
    <property type="chains" value="A/B/C/D=481-678"/>
</dbReference>
<dbReference type="PDB" id="3V2B">
    <property type="method" value="X-ray"/>
    <property type="resolution" value="2.20 A"/>
    <property type="chains" value="A=295-470"/>
</dbReference>
<dbReference type="PDB" id="4F0E">
    <property type="method" value="X-ray"/>
    <property type="resolution" value="2.40 A"/>
    <property type="chains" value="A/B/C/D=481-678"/>
</dbReference>
<dbReference type="PDB" id="6EK3">
    <property type="method" value="X-ray"/>
    <property type="resolution" value="1.60 A"/>
    <property type="chains" value="A/B=481-678"/>
</dbReference>
<dbReference type="PDB" id="6RY4">
    <property type="method" value="X-ray"/>
    <property type="resolution" value="1.95 A"/>
    <property type="chains" value="A/B=482-678"/>
</dbReference>
<dbReference type="PDB" id="7F41">
    <property type="method" value="X-ray"/>
    <property type="resolution" value="1.40 A"/>
    <property type="chains" value="A/B=481-678"/>
</dbReference>
<dbReference type="PDB" id="7F42">
    <property type="method" value="X-ray"/>
    <property type="resolution" value="1.41 A"/>
    <property type="chains" value="A/B=479-678"/>
</dbReference>
<dbReference type="PDB" id="7F43">
    <property type="method" value="X-ray"/>
    <property type="resolution" value="1.62 A"/>
    <property type="chains" value="A/B=481-678"/>
</dbReference>
<dbReference type="PDB" id="7OQQ">
    <property type="method" value="X-ray"/>
    <property type="resolution" value="2.00 A"/>
    <property type="chains" value="A/B=481-678"/>
</dbReference>
<dbReference type="PDB" id="7OSP">
    <property type="method" value="X-ray"/>
    <property type="resolution" value="1.44 A"/>
    <property type="chains" value="A/B=481-678"/>
</dbReference>
<dbReference type="PDB" id="7OSS">
    <property type="method" value="X-ray"/>
    <property type="resolution" value="1.50 A"/>
    <property type="chains" value="A/B=481-678"/>
</dbReference>
<dbReference type="PDB" id="7OSX">
    <property type="method" value="X-ray"/>
    <property type="resolution" value="1.60 A"/>
    <property type="chains" value="A/B=481-678"/>
</dbReference>
<dbReference type="PDB" id="7OTF">
    <property type="method" value="X-ray"/>
    <property type="resolution" value="1.30 A"/>
    <property type="chains" value="A/B=481-678"/>
</dbReference>
<dbReference type="PDB" id="7OTH">
    <property type="method" value="X-ray"/>
    <property type="resolution" value="1.70 A"/>
    <property type="chains" value="A/B=481-678"/>
</dbReference>
<dbReference type="PDB" id="7OUW">
    <property type="method" value="X-ray"/>
    <property type="resolution" value="1.60 A"/>
    <property type="chains" value="A/B=481-678"/>
</dbReference>
<dbReference type="PDB" id="7OUX">
    <property type="method" value="X-ray"/>
    <property type="resolution" value="1.95 A"/>
    <property type="chains" value="A/B=481-678"/>
</dbReference>
<dbReference type="PDB" id="7PW3">
    <property type="method" value="X-ray"/>
    <property type="resolution" value="1.40 A"/>
    <property type="chains" value="A/B=481-678"/>
</dbReference>
<dbReference type="PDB" id="7PWA">
    <property type="method" value="X-ray"/>
    <property type="resolution" value="1.60 A"/>
    <property type="chains" value="A/B=481-678"/>
</dbReference>
<dbReference type="PDB" id="7PWC">
    <property type="method" value="X-ray"/>
    <property type="resolution" value="1.50 A"/>
    <property type="chains" value="A/B=481-678"/>
</dbReference>
<dbReference type="PDB" id="7PWK">
    <property type="method" value="X-ray"/>
    <property type="resolution" value="1.80 A"/>
    <property type="chains" value="A/B=481-678"/>
</dbReference>
<dbReference type="PDB" id="7PWL">
    <property type="method" value="X-ray"/>
    <property type="resolution" value="2.00 A"/>
    <property type="chains" value="A/B=481-678"/>
</dbReference>
<dbReference type="PDB" id="7PWM">
    <property type="method" value="X-ray"/>
    <property type="resolution" value="1.35 A"/>
    <property type="chains" value="A/B=481-678"/>
</dbReference>
<dbReference type="PDB" id="7PWP">
    <property type="method" value="X-ray"/>
    <property type="resolution" value="2.10 A"/>
    <property type="chains" value="A/B=481-678"/>
</dbReference>
<dbReference type="PDB" id="7PWQ">
    <property type="method" value="X-ray"/>
    <property type="resolution" value="1.70 A"/>
    <property type="chains" value="A/B=481-678"/>
</dbReference>
<dbReference type="PDB" id="7PWR">
    <property type="method" value="X-ray"/>
    <property type="resolution" value="1.60 A"/>
    <property type="chains" value="A/B=481-678"/>
</dbReference>
<dbReference type="PDB" id="7PWS">
    <property type="method" value="X-ray"/>
    <property type="resolution" value="1.80 A"/>
    <property type="chains" value="A/B=481-678"/>
</dbReference>
<dbReference type="PDB" id="7PWU">
    <property type="method" value="X-ray"/>
    <property type="resolution" value="1.90 A"/>
    <property type="chains" value="A/B=481-678"/>
</dbReference>
<dbReference type="PDB" id="7PWW">
    <property type="method" value="X-ray"/>
    <property type="resolution" value="2.15 A"/>
    <property type="chains" value="A/B=481-678"/>
</dbReference>
<dbReference type="PDB" id="7PX6">
    <property type="method" value="X-ray"/>
    <property type="resolution" value="1.65 A"/>
    <property type="chains" value="A/B=481-678"/>
</dbReference>
<dbReference type="PDB" id="7PX7">
    <property type="method" value="X-ray"/>
    <property type="resolution" value="1.60 A"/>
    <property type="chains" value="A/B=481-678"/>
</dbReference>
<dbReference type="PDB" id="7R3O">
    <property type="method" value="X-ray"/>
    <property type="resolution" value="2.20 A"/>
    <property type="chains" value="A/B=481-678"/>
</dbReference>
<dbReference type="PDB" id="7R4A">
    <property type="method" value="X-ray"/>
    <property type="resolution" value="1.90 A"/>
    <property type="chains" value="A/B=481-678"/>
</dbReference>
<dbReference type="PDB" id="7R5D">
    <property type="method" value="X-ray"/>
    <property type="resolution" value="2.15 A"/>
    <property type="chains" value="A/B=481-678"/>
</dbReference>
<dbReference type="PDB" id="7Z1V">
    <property type="method" value="X-ray"/>
    <property type="resolution" value="1.50 A"/>
    <property type="chains" value="A/B=481-678"/>
</dbReference>
<dbReference type="PDB" id="7Z1W">
    <property type="method" value="X-ray"/>
    <property type="resolution" value="1.90 A"/>
    <property type="chains" value="A/B=481-678"/>
</dbReference>
<dbReference type="PDB" id="7Z1Y">
    <property type="method" value="X-ray"/>
    <property type="resolution" value="1.75 A"/>
    <property type="chains" value="A/B=481-678"/>
</dbReference>
<dbReference type="PDB" id="7Z2O">
    <property type="method" value="X-ray"/>
    <property type="resolution" value="1.50 A"/>
    <property type="chains" value="A/B=481-678"/>
</dbReference>
<dbReference type="PDB" id="7Z2Q">
    <property type="method" value="X-ray"/>
    <property type="resolution" value="2.00 A"/>
    <property type="chains" value="A/B=481-678"/>
</dbReference>
<dbReference type="PDB" id="7Z41">
    <property type="method" value="X-ray"/>
    <property type="resolution" value="2.10 A"/>
    <property type="chains" value="A/B=481-678"/>
</dbReference>
<dbReference type="PDBsum" id="3BLJ"/>
<dbReference type="PDBsum" id="3GEY"/>
<dbReference type="PDBsum" id="3V2B"/>
<dbReference type="PDBsum" id="4F0E"/>
<dbReference type="PDBsum" id="6EK3"/>
<dbReference type="PDBsum" id="6RY4"/>
<dbReference type="PDBsum" id="7F41"/>
<dbReference type="PDBsum" id="7F42"/>
<dbReference type="PDBsum" id="7F43"/>
<dbReference type="PDBsum" id="7OQQ"/>
<dbReference type="PDBsum" id="7OSP"/>
<dbReference type="PDBsum" id="7OSS"/>
<dbReference type="PDBsum" id="7OSX"/>
<dbReference type="PDBsum" id="7OTF"/>
<dbReference type="PDBsum" id="7OTH"/>
<dbReference type="PDBsum" id="7OUW"/>
<dbReference type="PDBsum" id="7OUX"/>
<dbReference type="PDBsum" id="7PW3"/>
<dbReference type="PDBsum" id="7PWA"/>
<dbReference type="PDBsum" id="7PWC"/>
<dbReference type="PDBsum" id="7PWK"/>
<dbReference type="PDBsum" id="7PWL"/>
<dbReference type="PDBsum" id="7PWM"/>
<dbReference type="PDBsum" id="7PWP"/>
<dbReference type="PDBsum" id="7PWQ"/>
<dbReference type="PDBsum" id="7PWR"/>
<dbReference type="PDBsum" id="7PWS"/>
<dbReference type="PDBsum" id="7PWU"/>
<dbReference type="PDBsum" id="7PWW"/>
<dbReference type="PDBsum" id="7PX6"/>
<dbReference type="PDBsum" id="7PX7"/>
<dbReference type="PDBsum" id="7R3O"/>
<dbReference type="PDBsum" id="7R4A"/>
<dbReference type="PDBsum" id="7R5D"/>
<dbReference type="PDBsum" id="7Z1V"/>
<dbReference type="PDBsum" id="7Z1W"/>
<dbReference type="PDBsum" id="7Z1Y"/>
<dbReference type="PDBsum" id="7Z2O"/>
<dbReference type="PDBsum" id="7Z2Q"/>
<dbReference type="PDBsum" id="7Z41"/>
<dbReference type="SMR" id="Q460N3"/>
<dbReference type="BioGRID" id="127917">
    <property type="interactions" value="5"/>
</dbReference>
<dbReference type="FunCoup" id="Q460N3">
    <property type="interactions" value="779"/>
</dbReference>
<dbReference type="IntAct" id="Q460N3">
    <property type="interactions" value="1"/>
</dbReference>
<dbReference type="STRING" id="9606.ENSP00000417214"/>
<dbReference type="BindingDB" id="Q460N3"/>
<dbReference type="ChEMBL" id="CHEMBL2176778"/>
<dbReference type="DrugBank" id="DB08348">
    <property type="generic name" value="N~2~,N~2~-DIMETHYL-N~1~-(6-OXO-5,6-DIHYDROPHENANTHRIDIN-2-YL)GLYCINAMIDE"/>
</dbReference>
<dbReference type="DrugCentral" id="Q460N3"/>
<dbReference type="GuidetoPHARMACOLOGY" id="3270"/>
<dbReference type="GlyGen" id="Q460N3">
    <property type="glycosylation" value="1 site"/>
</dbReference>
<dbReference type="iPTMnet" id="Q460N3"/>
<dbReference type="PhosphoSitePlus" id="Q460N3"/>
<dbReference type="BioMuta" id="PARP15"/>
<dbReference type="DMDM" id="116248564"/>
<dbReference type="MassIVE" id="Q460N3"/>
<dbReference type="PaxDb" id="9606-ENSP00000417214"/>
<dbReference type="PeptideAtlas" id="Q460N3"/>
<dbReference type="ProteomicsDB" id="61928">
    <molecule id="Q460N3-1"/>
</dbReference>
<dbReference type="ProteomicsDB" id="61929">
    <molecule id="Q460N3-2"/>
</dbReference>
<dbReference type="Antibodypedia" id="32915">
    <property type="antibodies" value="34 antibodies from 18 providers"/>
</dbReference>
<dbReference type="DNASU" id="165631"/>
<dbReference type="Ensembl" id="ENST00000310366.8">
    <molecule id="Q460N3-2"/>
    <property type="protein sequence ID" value="ENSP00000308436.4"/>
    <property type="gene ID" value="ENSG00000173200.13"/>
</dbReference>
<dbReference type="Ensembl" id="ENST00000464300.7">
    <molecule id="Q460N3-1"/>
    <property type="protein sequence ID" value="ENSP00000417214.2"/>
    <property type="gene ID" value="ENSG00000173200.13"/>
</dbReference>
<dbReference type="GeneID" id="165631"/>
<dbReference type="KEGG" id="hsa:165631"/>
<dbReference type="MANE-Select" id="ENST00000464300.7">
    <property type="protein sequence ID" value="ENSP00000417214.2"/>
    <property type="RefSeq nucleotide sequence ID" value="NM_001113523.3"/>
    <property type="RefSeq protein sequence ID" value="NP_001106995.1"/>
</dbReference>
<dbReference type="UCSC" id="uc003efm.3">
    <molecule id="Q460N3-1"/>
    <property type="organism name" value="human"/>
</dbReference>
<dbReference type="AGR" id="HGNC:26876"/>
<dbReference type="CTD" id="165631"/>
<dbReference type="DisGeNET" id="165631"/>
<dbReference type="GeneCards" id="PARP15"/>
<dbReference type="HGNC" id="HGNC:26876">
    <property type="gene designation" value="PARP15"/>
</dbReference>
<dbReference type="HPA" id="ENSG00000173200">
    <property type="expression patterns" value="Group enriched (bone marrow, intestine, lymphoid tissue)"/>
</dbReference>
<dbReference type="MIM" id="612066">
    <property type="type" value="gene"/>
</dbReference>
<dbReference type="neXtProt" id="NX_Q460N3"/>
<dbReference type="OpenTargets" id="ENSG00000173200"/>
<dbReference type="PharmGKB" id="PA134905094"/>
<dbReference type="VEuPathDB" id="HostDB:ENSG00000173200"/>
<dbReference type="eggNOG" id="KOG2633">
    <property type="taxonomic scope" value="Eukaryota"/>
</dbReference>
<dbReference type="GeneTree" id="ENSGT00940000163672"/>
<dbReference type="InParanoid" id="Q460N3"/>
<dbReference type="OMA" id="NDDEGCQ"/>
<dbReference type="OrthoDB" id="6133115at2759"/>
<dbReference type="PAN-GO" id="Q460N3">
    <property type="GO annotations" value="8 GO annotations based on evolutionary models"/>
</dbReference>
<dbReference type="PhylomeDB" id="Q460N3"/>
<dbReference type="TreeFam" id="TF316072"/>
<dbReference type="BRENDA" id="2.4.2.30">
    <property type="organism ID" value="2681"/>
</dbReference>
<dbReference type="PathwayCommons" id="Q460N3"/>
<dbReference type="SignaLink" id="Q460N3"/>
<dbReference type="BioGRID-ORCS" id="165631">
    <property type="hits" value="12 hits in 1155 CRISPR screens"/>
</dbReference>
<dbReference type="EvolutionaryTrace" id="Q460N3"/>
<dbReference type="GenomeRNAi" id="165631"/>
<dbReference type="Pharos" id="Q460N3">
    <property type="development level" value="Tchem"/>
</dbReference>
<dbReference type="PRO" id="PR:Q460N3"/>
<dbReference type="Proteomes" id="UP000005640">
    <property type="component" value="Chromosome 3"/>
</dbReference>
<dbReference type="RNAct" id="Q460N3">
    <property type="molecule type" value="protein"/>
</dbReference>
<dbReference type="Bgee" id="ENSG00000173200">
    <property type="expression patterns" value="Expressed in spleen and 90 other cell types or tissues"/>
</dbReference>
<dbReference type="ExpressionAtlas" id="Q460N3">
    <property type="expression patterns" value="baseline and differential"/>
</dbReference>
<dbReference type="GO" id="GO:0005737">
    <property type="term" value="C:cytoplasm"/>
    <property type="evidence" value="ECO:0000318"/>
    <property type="project" value="GO_Central"/>
</dbReference>
<dbReference type="GO" id="GO:0005634">
    <property type="term" value="C:nucleus"/>
    <property type="evidence" value="ECO:0000318"/>
    <property type="project" value="GO_Central"/>
</dbReference>
<dbReference type="GO" id="GO:0070403">
    <property type="term" value="F:NAD+ binding"/>
    <property type="evidence" value="ECO:0000315"/>
    <property type="project" value="UniProtKB"/>
</dbReference>
<dbReference type="GO" id="GO:0003950">
    <property type="term" value="F:NAD+ poly-ADP-ribosyltransferase activity"/>
    <property type="evidence" value="ECO:0000315"/>
    <property type="project" value="UniProtKB"/>
</dbReference>
<dbReference type="GO" id="GO:1990404">
    <property type="term" value="F:NAD+-protein mono-ADP-ribosyltransferase activity"/>
    <property type="evidence" value="ECO:0000314"/>
    <property type="project" value="UniProtKB"/>
</dbReference>
<dbReference type="GO" id="GO:0140806">
    <property type="term" value="F:NAD+-protein-aspartate ADP-ribosyltransferase activity"/>
    <property type="evidence" value="ECO:0007669"/>
    <property type="project" value="RHEA"/>
</dbReference>
<dbReference type="GO" id="GO:0140807">
    <property type="term" value="F:NAD+-protein-glutamate ADP-ribosyltransferase activity"/>
    <property type="evidence" value="ECO:0007669"/>
    <property type="project" value="RHEA"/>
</dbReference>
<dbReference type="GO" id="GO:0016779">
    <property type="term" value="F:nucleotidyltransferase activity"/>
    <property type="evidence" value="ECO:0007669"/>
    <property type="project" value="UniProtKB-KW"/>
</dbReference>
<dbReference type="GO" id="GO:0003714">
    <property type="term" value="F:transcription corepressor activity"/>
    <property type="evidence" value="ECO:0000315"/>
    <property type="project" value="UniProtKB"/>
</dbReference>
<dbReference type="GO" id="GO:0010629">
    <property type="term" value="P:negative regulation of gene expression"/>
    <property type="evidence" value="ECO:0000318"/>
    <property type="project" value="GO_Central"/>
</dbReference>
<dbReference type="GO" id="GO:0000122">
    <property type="term" value="P:negative regulation of transcription by RNA polymerase II"/>
    <property type="evidence" value="ECO:0000315"/>
    <property type="project" value="UniProtKB"/>
</dbReference>
<dbReference type="GO" id="GO:0070212">
    <property type="term" value="P:protein poly-ADP-ribosylation"/>
    <property type="evidence" value="ECO:0000315"/>
    <property type="project" value="UniProtKB"/>
</dbReference>
<dbReference type="CDD" id="cd02903">
    <property type="entry name" value="Macro_BAL-like"/>
    <property type="match status" value="1"/>
</dbReference>
<dbReference type="CDD" id="cd01439">
    <property type="entry name" value="TCCD_inducible_PARP_like"/>
    <property type="match status" value="1"/>
</dbReference>
<dbReference type="FunFam" id="3.40.220.10:FF:000009">
    <property type="entry name" value="Poly [ADP-ribose] polymerase"/>
    <property type="match status" value="1"/>
</dbReference>
<dbReference type="FunFam" id="3.90.228.10:FF:000008">
    <property type="entry name" value="Poly [ADP-ribose] polymerase"/>
    <property type="match status" value="1"/>
</dbReference>
<dbReference type="Gene3D" id="3.90.228.10">
    <property type="match status" value="1"/>
</dbReference>
<dbReference type="Gene3D" id="3.40.220.10">
    <property type="entry name" value="Leucine Aminopeptidase, subunit E, domain 1"/>
    <property type="match status" value="2"/>
</dbReference>
<dbReference type="InterPro" id="IPR002589">
    <property type="entry name" value="Macro_dom"/>
</dbReference>
<dbReference type="InterPro" id="IPR043472">
    <property type="entry name" value="Macro_dom-like"/>
</dbReference>
<dbReference type="InterPro" id="IPR052056">
    <property type="entry name" value="Mono-ARTD/PARP"/>
</dbReference>
<dbReference type="InterPro" id="IPR012317">
    <property type="entry name" value="Poly(ADP-ribose)pol_cat_dom"/>
</dbReference>
<dbReference type="PANTHER" id="PTHR14453">
    <property type="entry name" value="PARP/ZINC FINGER CCCH TYPE DOMAIN CONTAINING PROTEIN"/>
    <property type="match status" value="1"/>
</dbReference>
<dbReference type="PANTHER" id="PTHR14453:SF99">
    <property type="entry name" value="PROTEIN MONO-ADP-RIBOSYLTRANSFERASE PARP15"/>
    <property type="match status" value="1"/>
</dbReference>
<dbReference type="Pfam" id="PF01661">
    <property type="entry name" value="Macro"/>
    <property type="match status" value="2"/>
</dbReference>
<dbReference type="Pfam" id="PF00644">
    <property type="entry name" value="PARP"/>
    <property type="match status" value="1"/>
</dbReference>
<dbReference type="SMART" id="SM00506">
    <property type="entry name" value="A1pp"/>
    <property type="match status" value="2"/>
</dbReference>
<dbReference type="SUPFAM" id="SSF56399">
    <property type="entry name" value="ADP-ribosylation"/>
    <property type="match status" value="1"/>
</dbReference>
<dbReference type="SUPFAM" id="SSF52949">
    <property type="entry name" value="Macro domain-like"/>
    <property type="match status" value="2"/>
</dbReference>
<dbReference type="PROSITE" id="PS51154">
    <property type="entry name" value="MACRO"/>
    <property type="match status" value="2"/>
</dbReference>
<dbReference type="PROSITE" id="PS51059">
    <property type="entry name" value="PARP_CATALYTIC"/>
    <property type="match status" value="1"/>
</dbReference>
<evidence type="ECO:0000250" key="1">
    <source>
        <dbReference type="UniProtKB" id="Q9UKK3"/>
    </source>
</evidence>
<evidence type="ECO:0000255" key="2">
    <source>
        <dbReference type="PROSITE-ProRule" id="PRU00397"/>
    </source>
</evidence>
<evidence type="ECO:0000255" key="3">
    <source>
        <dbReference type="PROSITE-ProRule" id="PRU00490"/>
    </source>
</evidence>
<evidence type="ECO:0000256" key="4">
    <source>
        <dbReference type="SAM" id="MobiDB-lite"/>
    </source>
</evidence>
<evidence type="ECO:0000269" key="5">
    <source>
    </source>
</evidence>
<evidence type="ECO:0000269" key="6">
    <source>
    </source>
</evidence>
<evidence type="ECO:0000269" key="7">
    <source>
    </source>
</evidence>
<evidence type="ECO:0000269" key="8">
    <source>
    </source>
</evidence>
<evidence type="ECO:0000303" key="9">
    <source>
    </source>
</evidence>
<evidence type="ECO:0000303" key="10">
    <source>
    </source>
</evidence>
<evidence type="ECO:0000303" key="11">
    <source>
    </source>
</evidence>
<evidence type="ECO:0000305" key="12"/>
<evidence type="ECO:0000305" key="13">
    <source>
    </source>
</evidence>
<evidence type="ECO:0000312" key="14">
    <source>
        <dbReference type="HGNC" id="HGNC:26876"/>
    </source>
</evidence>
<evidence type="ECO:0007744" key="15">
    <source>
        <dbReference type="PDB" id="3V2B"/>
    </source>
</evidence>
<evidence type="ECO:0007829" key="16">
    <source>
        <dbReference type="PDB" id="3V2B"/>
    </source>
</evidence>
<evidence type="ECO:0007829" key="17">
    <source>
        <dbReference type="PDB" id="7F41"/>
    </source>
</evidence>
<evidence type="ECO:0007829" key="18">
    <source>
        <dbReference type="PDB" id="7OTF"/>
    </source>
</evidence>
<evidence type="ECO:0007829" key="19">
    <source>
        <dbReference type="PDB" id="7Z1Y"/>
    </source>
</evidence>
<sequence>MAAPGPLPAAALSPGAPTPRELMHGVAGVTSRAGRDREAGSVLPAGNRGARKASRRSSSRSMSRDNKFSKKDCLSIRNVVASIQTKEGLNLKLISGDVLYIWADVIVNSVPMNLQLGGGPLSRAFLQKAGPMLQKELDDRRRETEEKVGNIFMTSGCNLDCKAVLHAVAPYWNNGAETSWQIMANIIKKCLTTVEVLSFSSITFPMIGTGSLQFPKAVFAKLILSEVFEYSSSTRPITSPLQEVHFLVYTNDDEGCQAFLDEFTNWSRINPNKARIPMAGDTQGVVGTVSKPCFTAYEMKIGAITFQVATGDIATEQVDVIVNSTARTFNRKSGVSRAILEGAGQAVESECAVLAAQPHRDFIITPGGCLKCKIIIHVPGGKDVRKTVTSVLEECEQRKYTSVSLPAIGTGNAGKNPITVADNIIDAIVDFSSQHSTPSLKTVKVVIFQPELLNIFYDSMKKRDLSASLNFQSTFSMTTCNLPEHWTDMNHQLFCMVQLEPGQSEYNTIKDKFTRTCSSYAIEKIERIQNAFLWQSYQVKKRQMDIKNDHKNNERLLFHGTDADSVPYVNQHGFNRSCAGKNAVSYGKGTYFAVDASYSAKDTYSKPDSNGRKHMYVVRVLTGVFTKGRAGLVTPPPKNPHNPTDLFDSVTNNTRSPKLFVVFFDNQAYPEYLITFTA</sequence>
<name>PAR15_HUMAN</name>
<gene>
    <name evidence="11 14" type="primary">PARP15</name>
    <name evidence="10" type="synonym">BAL3</name>
</gene>
<accession>Q460N3</accession>
<accession>J3KR47</accession>
<accession>Q8N1K3</accession>
<organism>
    <name type="scientific">Homo sapiens</name>
    <name type="common">Human</name>
    <dbReference type="NCBI Taxonomy" id="9606"/>
    <lineage>
        <taxon>Eukaryota</taxon>
        <taxon>Metazoa</taxon>
        <taxon>Chordata</taxon>
        <taxon>Craniata</taxon>
        <taxon>Vertebrata</taxon>
        <taxon>Euteleostomi</taxon>
        <taxon>Mammalia</taxon>
        <taxon>Eutheria</taxon>
        <taxon>Euarchontoglires</taxon>
        <taxon>Primates</taxon>
        <taxon>Haplorrhini</taxon>
        <taxon>Catarrhini</taxon>
        <taxon>Hominidae</taxon>
        <taxon>Homo</taxon>
    </lineage>
</organism>